<gene>
    <name type="ordered locus">TP_0787</name>
</gene>
<protein>
    <recommendedName>
        <fullName>Uncharacterized protein TP_0787</fullName>
    </recommendedName>
</protein>
<sequence>MHCPLLRHTVVIEWAAPSMVGSAPMGRDSPAGMREAVYFLHRMVVCLGVLLCAASLLYVFGNFSHFLDKSQFIILRSCVGCSVLLVVACLCAGSFELYFFLTRSDAPYGRLLCITVVALLFGMGALVFNTVVLIVAKGT</sequence>
<name>Y787_TREPA</name>
<accession>O83766</accession>
<dbReference type="EMBL" id="AE000520">
    <property type="protein sequence ID" value="AAC65762.1"/>
    <property type="molecule type" value="Genomic_DNA"/>
</dbReference>
<dbReference type="PIR" id="B71280">
    <property type="entry name" value="B71280"/>
</dbReference>
<dbReference type="SMR" id="O83766"/>
<dbReference type="IntAct" id="O83766">
    <property type="interactions" value="4"/>
</dbReference>
<dbReference type="EnsemblBacteria" id="AAC65762">
    <property type="protein sequence ID" value="AAC65762"/>
    <property type="gene ID" value="TP_0787"/>
</dbReference>
<dbReference type="KEGG" id="tpa:TP_0787"/>
<dbReference type="KEGG" id="tpw:TPANIC_0787"/>
<dbReference type="HOGENOM" id="CLU_2037037_0_0_12"/>
<dbReference type="Proteomes" id="UP000000811">
    <property type="component" value="Chromosome"/>
</dbReference>
<dbReference type="GO" id="GO:0005886">
    <property type="term" value="C:plasma membrane"/>
    <property type="evidence" value="ECO:0007669"/>
    <property type="project" value="UniProtKB-SubCell"/>
</dbReference>
<keyword id="KW-1003">Cell membrane</keyword>
<keyword id="KW-0472">Membrane</keyword>
<keyword id="KW-1185">Reference proteome</keyword>
<keyword id="KW-0812">Transmembrane</keyword>
<keyword id="KW-1133">Transmembrane helix</keyword>
<reference key="1">
    <citation type="journal article" date="1998" name="Science">
        <title>Complete genome sequence of Treponema pallidum, the syphilis spirochete.</title>
        <authorList>
            <person name="Fraser C.M."/>
            <person name="Norris S.J."/>
            <person name="Weinstock G.M."/>
            <person name="White O."/>
            <person name="Sutton G.G."/>
            <person name="Dodson R.J."/>
            <person name="Gwinn M.L."/>
            <person name="Hickey E.K."/>
            <person name="Clayton R.A."/>
            <person name="Ketchum K.A."/>
            <person name="Sodergren E."/>
            <person name="Hardham J.M."/>
            <person name="McLeod M.P."/>
            <person name="Salzberg S.L."/>
            <person name="Peterson J.D."/>
            <person name="Khalak H.G."/>
            <person name="Richardson D.L."/>
            <person name="Howell J.K."/>
            <person name="Chidambaram M."/>
            <person name="Utterback T.R."/>
            <person name="McDonald L.A."/>
            <person name="Artiach P."/>
            <person name="Bowman C."/>
            <person name="Cotton M.D."/>
            <person name="Fujii C."/>
            <person name="Garland S.A."/>
            <person name="Hatch B."/>
            <person name="Horst K."/>
            <person name="Roberts K.M."/>
            <person name="Sandusky M."/>
            <person name="Weidman J.F."/>
            <person name="Smith H.O."/>
            <person name="Venter J.C."/>
        </authorList>
    </citation>
    <scope>NUCLEOTIDE SEQUENCE [LARGE SCALE GENOMIC DNA]</scope>
    <source>
        <strain>Nichols</strain>
    </source>
</reference>
<proteinExistence type="predicted"/>
<comment type="subcellular location">
    <subcellularLocation>
        <location evidence="2">Cell membrane</location>
        <topology evidence="2">Multi-pass membrane protein</topology>
    </subcellularLocation>
</comment>
<evidence type="ECO:0000255" key="1"/>
<evidence type="ECO:0000305" key="2"/>
<feature type="chain" id="PRO_0000202325" description="Uncharacterized protein TP_0787">
    <location>
        <begin position="1"/>
        <end position="139"/>
    </location>
</feature>
<feature type="transmembrane region" description="Helical" evidence="1">
    <location>
        <begin position="38"/>
        <end position="60"/>
    </location>
</feature>
<feature type="transmembrane region" description="Helical" evidence="1">
    <location>
        <begin position="72"/>
        <end position="94"/>
    </location>
</feature>
<feature type="transmembrane region" description="Helical" evidence="1">
    <location>
        <begin position="114"/>
        <end position="136"/>
    </location>
</feature>
<organism>
    <name type="scientific">Treponema pallidum (strain Nichols)</name>
    <dbReference type="NCBI Taxonomy" id="243276"/>
    <lineage>
        <taxon>Bacteria</taxon>
        <taxon>Pseudomonadati</taxon>
        <taxon>Spirochaetota</taxon>
        <taxon>Spirochaetia</taxon>
        <taxon>Spirochaetales</taxon>
        <taxon>Treponemataceae</taxon>
        <taxon>Treponema</taxon>
    </lineage>
</organism>